<comment type="function">
    <text evidence="1">One of the primary rRNA binding proteins, it binds directly to 16S rRNA where it helps nucleate assembly of the platform of the 30S subunit by binding and bridging several RNA helices of the 16S rRNA.</text>
</comment>
<comment type="function">
    <text evidence="1">Forms an intersubunit bridge (bridge B4) with the 23S rRNA of the 50S subunit in the ribosome.</text>
</comment>
<comment type="subunit">
    <text evidence="1">Part of the 30S ribosomal subunit. Forms a bridge to the 50S subunit in the 70S ribosome, contacting the 23S rRNA.</text>
</comment>
<comment type="similarity">
    <text evidence="1">Belongs to the universal ribosomal protein uS15 family.</text>
</comment>
<accession>C1CFJ7</accession>
<feature type="chain" id="PRO_1000166442" description="Small ribosomal subunit protein uS15">
    <location>
        <begin position="1"/>
        <end position="89"/>
    </location>
</feature>
<proteinExistence type="inferred from homology"/>
<name>RS15_STRZJ</name>
<reference key="1">
    <citation type="journal article" date="2010" name="Genome Biol.">
        <title>Structure and dynamics of the pan-genome of Streptococcus pneumoniae and closely related species.</title>
        <authorList>
            <person name="Donati C."/>
            <person name="Hiller N.L."/>
            <person name="Tettelin H."/>
            <person name="Muzzi A."/>
            <person name="Croucher N.J."/>
            <person name="Angiuoli S.V."/>
            <person name="Oggioni M."/>
            <person name="Dunning Hotopp J.C."/>
            <person name="Hu F.Z."/>
            <person name="Riley D.R."/>
            <person name="Covacci A."/>
            <person name="Mitchell T.J."/>
            <person name="Bentley S.D."/>
            <person name="Kilian M."/>
            <person name="Ehrlich G.D."/>
            <person name="Rappuoli R."/>
            <person name="Moxon E.R."/>
            <person name="Masignani V."/>
        </authorList>
    </citation>
    <scope>NUCLEOTIDE SEQUENCE [LARGE SCALE GENOMIC DNA]</scope>
    <source>
        <strain>JJA</strain>
    </source>
</reference>
<gene>
    <name evidence="1" type="primary">rpsO</name>
    <name type="ordered locus">SPJ_1521</name>
</gene>
<dbReference type="EMBL" id="CP000919">
    <property type="protein sequence ID" value="ACO19968.1"/>
    <property type="molecule type" value="Genomic_DNA"/>
</dbReference>
<dbReference type="RefSeq" id="WP_001018251.1">
    <property type="nucleotide sequence ID" value="NC_012466.1"/>
</dbReference>
<dbReference type="SMR" id="C1CFJ7"/>
<dbReference type="GeneID" id="93847676"/>
<dbReference type="KEGG" id="sjj:SPJ_1521"/>
<dbReference type="HOGENOM" id="CLU_148518_0_0_9"/>
<dbReference type="Proteomes" id="UP000002206">
    <property type="component" value="Chromosome"/>
</dbReference>
<dbReference type="GO" id="GO:0022627">
    <property type="term" value="C:cytosolic small ribosomal subunit"/>
    <property type="evidence" value="ECO:0007669"/>
    <property type="project" value="TreeGrafter"/>
</dbReference>
<dbReference type="GO" id="GO:0019843">
    <property type="term" value="F:rRNA binding"/>
    <property type="evidence" value="ECO:0007669"/>
    <property type="project" value="UniProtKB-UniRule"/>
</dbReference>
<dbReference type="GO" id="GO:0003735">
    <property type="term" value="F:structural constituent of ribosome"/>
    <property type="evidence" value="ECO:0007669"/>
    <property type="project" value="InterPro"/>
</dbReference>
<dbReference type="GO" id="GO:0006412">
    <property type="term" value="P:translation"/>
    <property type="evidence" value="ECO:0007669"/>
    <property type="project" value="UniProtKB-UniRule"/>
</dbReference>
<dbReference type="CDD" id="cd00353">
    <property type="entry name" value="Ribosomal_S15p_S13e"/>
    <property type="match status" value="1"/>
</dbReference>
<dbReference type="FunFam" id="1.10.287.10:FF:000002">
    <property type="entry name" value="30S ribosomal protein S15"/>
    <property type="match status" value="1"/>
</dbReference>
<dbReference type="Gene3D" id="6.10.250.3130">
    <property type="match status" value="1"/>
</dbReference>
<dbReference type="Gene3D" id="1.10.287.10">
    <property type="entry name" value="S15/NS1, RNA-binding"/>
    <property type="match status" value="1"/>
</dbReference>
<dbReference type="HAMAP" id="MF_01343_B">
    <property type="entry name" value="Ribosomal_uS15_B"/>
    <property type="match status" value="1"/>
</dbReference>
<dbReference type="InterPro" id="IPR000589">
    <property type="entry name" value="Ribosomal_uS15"/>
</dbReference>
<dbReference type="InterPro" id="IPR005290">
    <property type="entry name" value="Ribosomal_uS15_bac-type"/>
</dbReference>
<dbReference type="InterPro" id="IPR009068">
    <property type="entry name" value="uS15_NS1_RNA-bd_sf"/>
</dbReference>
<dbReference type="NCBIfam" id="TIGR00952">
    <property type="entry name" value="S15_bact"/>
    <property type="match status" value="1"/>
</dbReference>
<dbReference type="PANTHER" id="PTHR23321">
    <property type="entry name" value="RIBOSOMAL PROTEIN S15, BACTERIAL AND ORGANELLAR"/>
    <property type="match status" value="1"/>
</dbReference>
<dbReference type="PANTHER" id="PTHR23321:SF26">
    <property type="entry name" value="SMALL RIBOSOMAL SUBUNIT PROTEIN US15M"/>
    <property type="match status" value="1"/>
</dbReference>
<dbReference type="Pfam" id="PF00312">
    <property type="entry name" value="Ribosomal_S15"/>
    <property type="match status" value="1"/>
</dbReference>
<dbReference type="SMART" id="SM01387">
    <property type="entry name" value="Ribosomal_S15"/>
    <property type="match status" value="1"/>
</dbReference>
<dbReference type="SUPFAM" id="SSF47060">
    <property type="entry name" value="S15/NS1 RNA-binding domain"/>
    <property type="match status" value="1"/>
</dbReference>
<dbReference type="PROSITE" id="PS00362">
    <property type="entry name" value="RIBOSOMAL_S15"/>
    <property type="match status" value="1"/>
</dbReference>
<organism>
    <name type="scientific">Streptococcus pneumoniae (strain JJA)</name>
    <dbReference type="NCBI Taxonomy" id="488222"/>
    <lineage>
        <taxon>Bacteria</taxon>
        <taxon>Bacillati</taxon>
        <taxon>Bacillota</taxon>
        <taxon>Bacilli</taxon>
        <taxon>Lactobacillales</taxon>
        <taxon>Streptococcaceae</taxon>
        <taxon>Streptococcus</taxon>
    </lineage>
</organism>
<protein>
    <recommendedName>
        <fullName evidence="1">Small ribosomal subunit protein uS15</fullName>
    </recommendedName>
    <alternativeName>
        <fullName evidence="2">30S ribosomal protein S15</fullName>
    </alternativeName>
</protein>
<evidence type="ECO:0000255" key="1">
    <source>
        <dbReference type="HAMAP-Rule" id="MF_01343"/>
    </source>
</evidence>
<evidence type="ECO:0000305" key="2"/>
<sequence>MAISKEKKNEIIAQYARHEGDTGSVEVQVAVLTWEINHLNEHIKQHKKDHATYRGLMKKIGRRRNLLAYLRKNDVNRYRELINSLGLRR</sequence>
<keyword id="KW-0687">Ribonucleoprotein</keyword>
<keyword id="KW-0689">Ribosomal protein</keyword>
<keyword id="KW-0694">RNA-binding</keyword>
<keyword id="KW-0699">rRNA-binding</keyword>